<proteinExistence type="evidence at transcript level"/>
<accession>O65590</accession>
<feature type="chain" id="PRO_0000133676" description="Probable WRKY transcription factor 34">
    <location>
        <begin position="1"/>
        <end position="568"/>
    </location>
</feature>
<feature type="DNA-binding region" description="WRKY 1" evidence="2">
    <location>
        <begin position="172"/>
        <end position="236"/>
    </location>
</feature>
<feature type="DNA-binding region" description="WRKY 2" evidence="2">
    <location>
        <begin position="366"/>
        <end position="431"/>
    </location>
</feature>
<feature type="region of interest" description="Disordered" evidence="3">
    <location>
        <begin position="230"/>
        <end position="252"/>
    </location>
</feature>
<feature type="region of interest" description="Disordered" evidence="3">
    <location>
        <begin position="337"/>
        <end position="360"/>
    </location>
</feature>
<feature type="binding site" evidence="1">
    <location>
        <position position="203"/>
    </location>
    <ligand>
        <name>Zn(2+)</name>
        <dbReference type="ChEBI" id="CHEBI:29105"/>
    </ligand>
</feature>
<feature type="binding site" evidence="1">
    <location>
        <position position="208"/>
    </location>
    <ligand>
        <name>Zn(2+)</name>
        <dbReference type="ChEBI" id="CHEBI:29105"/>
    </ligand>
</feature>
<feature type="binding site" evidence="1">
    <location>
        <position position="231"/>
    </location>
    <ligand>
        <name>Zn(2+)</name>
        <dbReference type="ChEBI" id="CHEBI:29105"/>
    </ligand>
</feature>
<feature type="binding site" evidence="1">
    <location>
        <position position="233"/>
    </location>
    <ligand>
        <name>Zn(2+)</name>
        <dbReference type="ChEBI" id="CHEBI:29105"/>
    </ligand>
</feature>
<feature type="binding site" evidence="1">
    <location>
        <position position="397"/>
    </location>
    <ligand>
        <name>Zn(2+)</name>
        <dbReference type="ChEBI" id="CHEBI:29105"/>
    </ligand>
</feature>
<feature type="binding site" evidence="1">
    <location>
        <position position="402"/>
    </location>
    <ligand>
        <name>Zn(2+)</name>
        <dbReference type="ChEBI" id="CHEBI:29105"/>
    </ligand>
</feature>
<feature type="binding site" evidence="1">
    <location>
        <position position="426"/>
    </location>
    <ligand>
        <name>Zn(2+)</name>
        <dbReference type="ChEBI" id="CHEBI:29105"/>
    </ligand>
</feature>
<feature type="binding site" evidence="1">
    <location>
        <position position="428"/>
    </location>
    <ligand>
        <name>Zn(2+)</name>
        <dbReference type="ChEBI" id="CHEBI:29105"/>
    </ligand>
</feature>
<evidence type="ECO:0000250" key="1">
    <source>
        <dbReference type="UniProtKB" id="Q9SI37"/>
    </source>
</evidence>
<evidence type="ECO:0000255" key="2">
    <source>
        <dbReference type="PROSITE-ProRule" id="PRU00223"/>
    </source>
</evidence>
<evidence type="ECO:0000256" key="3">
    <source>
        <dbReference type="SAM" id="MobiDB-lite"/>
    </source>
</evidence>
<evidence type="ECO:0000305" key="4"/>
<dbReference type="EMBL" id="AY052649">
    <property type="protein sequence ID" value="AAL11010.1"/>
    <property type="molecule type" value="mRNA"/>
</dbReference>
<dbReference type="EMBL" id="AL022223">
    <property type="protein sequence ID" value="CAA18226.1"/>
    <property type="molecule type" value="Genomic_DNA"/>
</dbReference>
<dbReference type="EMBL" id="AL161565">
    <property type="protein sequence ID" value="CAB79499.1"/>
    <property type="molecule type" value="Genomic_DNA"/>
</dbReference>
<dbReference type="EMBL" id="CP002687">
    <property type="protein sequence ID" value="AEE85199.1"/>
    <property type="molecule type" value="Genomic_DNA"/>
</dbReference>
<dbReference type="PIR" id="T05060">
    <property type="entry name" value="T05060"/>
</dbReference>
<dbReference type="RefSeq" id="NP_194374.1">
    <property type="nucleotide sequence ID" value="NM_118777.2"/>
</dbReference>
<dbReference type="SMR" id="O65590"/>
<dbReference type="BioGRID" id="14037">
    <property type="interactions" value="1"/>
</dbReference>
<dbReference type="STRING" id="3702.O65590"/>
<dbReference type="iPTMnet" id="O65590"/>
<dbReference type="PaxDb" id="3702-AT4G26440.1"/>
<dbReference type="EnsemblPlants" id="AT4G26440.1">
    <property type="protein sequence ID" value="AT4G26440.1"/>
    <property type="gene ID" value="AT4G26440"/>
</dbReference>
<dbReference type="GeneID" id="828750"/>
<dbReference type="Gramene" id="AT4G26440.1">
    <property type="protein sequence ID" value="AT4G26440.1"/>
    <property type="gene ID" value="AT4G26440"/>
</dbReference>
<dbReference type="KEGG" id="ath:AT4G26440"/>
<dbReference type="Araport" id="AT4G26440"/>
<dbReference type="TAIR" id="AT4G26440">
    <property type="gene designation" value="WRKY34"/>
</dbReference>
<dbReference type="eggNOG" id="ENOG502QU86">
    <property type="taxonomic scope" value="Eukaryota"/>
</dbReference>
<dbReference type="HOGENOM" id="CLU_012086_3_2_1"/>
<dbReference type="InParanoid" id="O65590"/>
<dbReference type="OMA" id="MQIDGTE"/>
<dbReference type="PhylomeDB" id="O65590"/>
<dbReference type="PRO" id="PR:O65590"/>
<dbReference type="Proteomes" id="UP000006548">
    <property type="component" value="Chromosome 4"/>
</dbReference>
<dbReference type="ExpressionAtlas" id="O65590">
    <property type="expression patterns" value="baseline and differential"/>
</dbReference>
<dbReference type="GO" id="GO:0005634">
    <property type="term" value="C:nucleus"/>
    <property type="evidence" value="ECO:0000314"/>
    <property type="project" value="TAIR"/>
</dbReference>
<dbReference type="GO" id="GO:0003700">
    <property type="term" value="F:DNA-binding transcription factor activity"/>
    <property type="evidence" value="ECO:0000250"/>
    <property type="project" value="TAIR"/>
</dbReference>
<dbReference type="GO" id="GO:0046872">
    <property type="term" value="F:metal ion binding"/>
    <property type="evidence" value="ECO:0007669"/>
    <property type="project" value="UniProtKB-KW"/>
</dbReference>
<dbReference type="GO" id="GO:0000976">
    <property type="term" value="F:transcription cis-regulatory region binding"/>
    <property type="evidence" value="ECO:0000353"/>
    <property type="project" value="TAIR"/>
</dbReference>
<dbReference type="GO" id="GO:0009555">
    <property type="term" value="P:pollen development"/>
    <property type="evidence" value="ECO:0000316"/>
    <property type="project" value="TAIR"/>
</dbReference>
<dbReference type="GO" id="GO:0009846">
    <property type="term" value="P:pollen germination"/>
    <property type="evidence" value="ECO:0000315"/>
    <property type="project" value="TAIR"/>
</dbReference>
<dbReference type="GO" id="GO:0009409">
    <property type="term" value="P:response to cold"/>
    <property type="evidence" value="ECO:0000270"/>
    <property type="project" value="TAIR"/>
</dbReference>
<dbReference type="FunFam" id="2.20.25.80:FF:000006">
    <property type="entry name" value="WRKY transcription factor"/>
    <property type="match status" value="1"/>
</dbReference>
<dbReference type="FunFam" id="2.20.25.80:FF:000003">
    <property type="entry name" value="WRKY transcription factor 57"/>
    <property type="match status" value="1"/>
</dbReference>
<dbReference type="Gene3D" id="2.20.25.80">
    <property type="entry name" value="WRKY domain"/>
    <property type="match status" value="2"/>
</dbReference>
<dbReference type="InterPro" id="IPR003657">
    <property type="entry name" value="WRKY_dom"/>
</dbReference>
<dbReference type="InterPro" id="IPR036576">
    <property type="entry name" value="WRKY_dom_sf"/>
</dbReference>
<dbReference type="InterPro" id="IPR044810">
    <property type="entry name" value="WRKY_plant"/>
</dbReference>
<dbReference type="PANTHER" id="PTHR31221:SF260">
    <property type="entry name" value="WRKY TRANSCRIPTION FACTOR 34-RELATED"/>
    <property type="match status" value="1"/>
</dbReference>
<dbReference type="PANTHER" id="PTHR31221">
    <property type="entry name" value="WRKY TRANSCRIPTION FACTOR PROTEIN 1-RELATED"/>
    <property type="match status" value="1"/>
</dbReference>
<dbReference type="Pfam" id="PF03106">
    <property type="entry name" value="WRKY"/>
    <property type="match status" value="2"/>
</dbReference>
<dbReference type="SMART" id="SM00774">
    <property type="entry name" value="WRKY"/>
    <property type="match status" value="2"/>
</dbReference>
<dbReference type="SUPFAM" id="SSF118290">
    <property type="entry name" value="WRKY DNA-binding domain"/>
    <property type="match status" value="2"/>
</dbReference>
<dbReference type="PROSITE" id="PS50811">
    <property type="entry name" value="WRKY"/>
    <property type="match status" value="2"/>
</dbReference>
<name>WRK34_ARATH</name>
<reference key="1">
    <citation type="submission" date="2001-08" db="EMBL/GenBank/DDBJ databases">
        <title>Arabidopsis thaliana transcription factor WRKY34.</title>
        <authorList>
            <person name="Ulker B."/>
            <person name="Kushnir S."/>
            <person name="Somssich I.E."/>
        </authorList>
    </citation>
    <scope>NUCLEOTIDE SEQUENCE [MRNA]</scope>
    <source>
        <strain>cv. Columbia</strain>
        <tissue>Flower</tissue>
    </source>
</reference>
<reference key="2">
    <citation type="journal article" date="1999" name="Nature">
        <title>Sequence and analysis of chromosome 4 of the plant Arabidopsis thaliana.</title>
        <authorList>
            <person name="Mayer K.F.X."/>
            <person name="Schueller C."/>
            <person name="Wambutt R."/>
            <person name="Murphy G."/>
            <person name="Volckaert G."/>
            <person name="Pohl T."/>
            <person name="Duesterhoeft A."/>
            <person name="Stiekema W."/>
            <person name="Entian K.-D."/>
            <person name="Terryn N."/>
            <person name="Harris B."/>
            <person name="Ansorge W."/>
            <person name="Brandt P."/>
            <person name="Grivell L.A."/>
            <person name="Rieger M."/>
            <person name="Weichselgartner M."/>
            <person name="de Simone V."/>
            <person name="Obermaier B."/>
            <person name="Mache R."/>
            <person name="Mueller M."/>
            <person name="Kreis M."/>
            <person name="Delseny M."/>
            <person name="Puigdomenech P."/>
            <person name="Watson M."/>
            <person name="Schmidtheini T."/>
            <person name="Reichert B."/>
            <person name="Portetelle D."/>
            <person name="Perez-Alonso M."/>
            <person name="Boutry M."/>
            <person name="Bancroft I."/>
            <person name="Vos P."/>
            <person name="Hoheisel J."/>
            <person name="Zimmermann W."/>
            <person name="Wedler H."/>
            <person name="Ridley P."/>
            <person name="Langham S.-A."/>
            <person name="McCullagh B."/>
            <person name="Bilham L."/>
            <person name="Robben J."/>
            <person name="van der Schueren J."/>
            <person name="Grymonprez B."/>
            <person name="Chuang Y.-J."/>
            <person name="Vandenbussche F."/>
            <person name="Braeken M."/>
            <person name="Weltjens I."/>
            <person name="Voet M."/>
            <person name="Bastiaens I."/>
            <person name="Aert R."/>
            <person name="Defoor E."/>
            <person name="Weitzenegger T."/>
            <person name="Bothe G."/>
            <person name="Ramsperger U."/>
            <person name="Hilbert H."/>
            <person name="Braun M."/>
            <person name="Holzer E."/>
            <person name="Brandt A."/>
            <person name="Peters S."/>
            <person name="van Staveren M."/>
            <person name="Dirkse W."/>
            <person name="Mooijman P."/>
            <person name="Klein Lankhorst R."/>
            <person name="Rose M."/>
            <person name="Hauf J."/>
            <person name="Koetter P."/>
            <person name="Berneiser S."/>
            <person name="Hempel S."/>
            <person name="Feldpausch M."/>
            <person name="Lamberth S."/>
            <person name="Van den Daele H."/>
            <person name="De Keyser A."/>
            <person name="Buysshaert C."/>
            <person name="Gielen J."/>
            <person name="Villarroel R."/>
            <person name="De Clercq R."/>
            <person name="van Montagu M."/>
            <person name="Rogers J."/>
            <person name="Cronin A."/>
            <person name="Quail M.A."/>
            <person name="Bray-Allen S."/>
            <person name="Clark L."/>
            <person name="Doggett J."/>
            <person name="Hall S."/>
            <person name="Kay M."/>
            <person name="Lennard N."/>
            <person name="McLay K."/>
            <person name="Mayes R."/>
            <person name="Pettett A."/>
            <person name="Rajandream M.A."/>
            <person name="Lyne M."/>
            <person name="Benes V."/>
            <person name="Rechmann S."/>
            <person name="Borkova D."/>
            <person name="Bloecker H."/>
            <person name="Scharfe M."/>
            <person name="Grimm M."/>
            <person name="Loehnert T.-H."/>
            <person name="Dose S."/>
            <person name="de Haan M."/>
            <person name="Maarse A.C."/>
            <person name="Schaefer M."/>
            <person name="Mueller-Auer S."/>
            <person name="Gabel C."/>
            <person name="Fuchs M."/>
            <person name="Fartmann B."/>
            <person name="Granderath K."/>
            <person name="Dauner D."/>
            <person name="Herzl A."/>
            <person name="Neumann S."/>
            <person name="Argiriou A."/>
            <person name="Vitale D."/>
            <person name="Liguori R."/>
            <person name="Piravandi E."/>
            <person name="Massenet O."/>
            <person name="Quigley F."/>
            <person name="Clabauld G."/>
            <person name="Muendlein A."/>
            <person name="Felber R."/>
            <person name="Schnabl S."/>
            <person name="Hiller R."/>
            <person name="Schmidt W."/>
            <person name="Lecharny A."/>
            <person name="Aubourg S."/>
            <person name="Chefdor F."/>
            <person name="Cooke R."/>
            <person name="Berger C."/>
            <person name="Monfort A."/>
            <person name="Casacuberta E."/>
            <person name="Gibbons T."/>
            <person name="Weber N."/>
            <person name="Vandenbol M."/>
            <person name="Bargues M."/>
            <person name="Terol J."/>
            <person name="Torres A."/>
            <person name="Perez-Perez A."/>
            <person name="Purnelle B."/>
            <person name="Bent E."/>
            <person name="Johnson S."/>
            <person name="Tacon D."/>
            <person name="Jesse T."/>
            <person name="Heijnen L."/>
            <person name="Schwarz S."/>
            <person name="Scholler P."/>
            <person name="Heber S."/>
            <person name="Francs P."/>
            <person name="Bielke C."/>
            <person name="Frishman D."/>
            <person name="Haase D."/>
            <person name="Lemcke K."/>
            <person name="Mewes H.-W."/>
            <person name="Stocker S."/>
            <person name="Zaccaria P."/>
            <person name="Bevan M."/>
            <person name="Wilson R.K."/>
            <person name="de la Bastide M."/>
            <person name="Habermann K."/>
            <person name="Parnell L."/>
            <person name="Dedhia N."/>
            <person name="Gnoj L."/>
            <person name="Schutz K."/>
            <person name="Huang E."/>
            <person name="Spiegel L."/>
            <person name="Sekhon M."/>
            <person name="Murray J."/>
            <person name="Sheet P."/>
            <person name="Cordes M."/>
            <person name="Abu-Threideh J."/>
            <person name="Stoneking T."/>
            <person name="Kalicki J."/>
            <person name="Graves T."/>
            <person name="Harmon G."/>
            <person name="Edwards J."/>
            <person name="Latreille P."/>
            <person name="Courtney L."/>
            <person name="Cloud J."/>
            <person name="Abbott A."/>
            <person name="Scott K."/>
            <person name="Johnson D."/>
            <person name="Minx P."/>
            <person name="Bentley D."/>
            <person name="Fulton B."/>
            <person name="Miller N."/>
            <person name="Greco T."/>
            <person name="Kemp K."/>
            <person name="Kramer J."/>
            <person name="Fulton L."/>
            <person name="Mardis E."/>
            <person name="Dante M."/>
            <person name="Pepin K."/>
            <person name="Hillier L.W."/>
            <person name="Nelson J."/>
            <person name="Spieth J."/>
            <person name="Ryan E."/>
            <person name="Andrews S."/>
            <person name="Geisel C."/>
            <person name="Layman D."/>
            <person name="Du H."/>
            <person name="Ali J."/>
            <person name="Berghoff A."/>
            <person name="Jones K."/>
            <person name="Drone K."/>
            <person name="Cotton M."/>
            <person name="Joshu C."/>
            <person name="Antonoiu B."/>
            <person name="Zidanic M."/>
            <person name="Strong C."/>
            <person name="Sun H."/>
            <person name="Lamar B."/>
            <person name="Yordan C."/>
            <person name="Ma P."/>
            <person name="Zhong J."/>
            <person name="Preston R."/>
            <person name="Vil D."/>
            <person name="Shekher M."/>
            <person name="Matero A."/>
            <person name="Shah R."/>
            <person name="Swaby I.K."/>
            <person name="O'Shaughnessy A."/>
            <person name="Rodriguez M."/>
            <person name="Hoffman J."/>
            <person name="Till S."/>
            <person name="Granat S."/>
            <person name="Shohdy N."/>
            <person name="Hasegawa A."/>
            <person name="Hameed A."/>
            <person name="Lodhi M."/>
            <person name="Johnson A."/>
            <person name="Chen E."/>
            <person name="Marra M.A."/>
            <person name="Martienssen R."/>
            <person name="McCombie W.R."/>
        </authorList>
    </citation>
    <scope>NUCLEOTIDE SEQUENCE [LARGE SCALE GENOMIC DNA]</scope>
    <source>
        <strain>cv. Columbia</strain>
    </source>
</reference>
<reference key="3">
    <citation type="journal article" date="2017" name="Plant J.">
        <title>Araport11: a complete reannotation of the Arabidopsis thaliana reference genome.</title>
        <authorList>
            <person name="Cheng C.Y."/>
            <person name="Krishnakumar V."/>
            <person name="Chan A.P."/>
            <person name="Thibaud-Nissen F."/>
            <person name="Schobel S."/>
            <person name="Town C.D."/>
        </authorList>
    </citation>
    <scope>GENOME REANNOTATION</scope>
    <source>
        <strain>cv. Columbia</strain>
    </source>
</reference>
<gene>
    <name type="primary">WRKY34</name>
    <name type="ordered locus">At4g26440</name>
    <name type="ORF">M3E9.130</name>
</gene>
<organism>
    <name type="scientific">Arabidopsis thaliana</name>
    <name type="common">Mouse-ear cress</name>
    <dbReference type="NCBI Taxonomy" id="3702"/>
    <lineage>
        <taxon>Eukaryota</taxon>
        <taxon>Viridiplantae</taxon>
        <taxon>Streptophyta</taxon>
        <taxon>Embryophyta</taxon>
        <taxon>Tracheophyta</taxon>
        <taxon>Spermatophyta</taxon>
        <taxon>Magnoliopsida</taxon>
        <taxon>eudicotyledons</taxon>
        <taxon>Gunneridae</taxon>
        <taxon>Pentapetalae</taxon>
        <taxon>rosids</taxon>
        <taxon>malvids</taxon>
        <taxon>Brassicales</taxon>
        <taxon>Brassicaceae</taxon>
        <taxon>Camelineae</taxon>
        <taxon>Arabidopsis</taxon>
    </lineage>
</organism>
<sequence length="568" mass="62167">MAGIDNKAAVMGEWFDCSTTNHRKRSKAELGREFSLNYIKNEDSLQTTFQESSRGALRERIAARSGFNAPWLNTEDILQSKSLTISSPGLSPATLLESPVFLSNPLLSPTTGKLSSVPSDKAKAELFDDITTSLAFQTISGSGLDPTNIALEPDDSQDYEERQLGGLGDSMACCAPADDGYNWRKYGQKLVKGSEYPRSYYKCTHPNCEAKKKVERSREGHIIEIIYTGDHIHSKPPPNRRSGIGSSGTGQDMQIDATEYEGFAGTNENIEWTSPVSAELEYGSHSGSMQVQNGTHQFGYGDAAADALYRDENEDDRTSHMSVSLTYDGEVEESESKRRKLEAYATETSGSTRASREPRVVVQTTSDIDILDDGYRWRKYGQKVVKGNPNPRSYYKCTANGCTVTKHVERASDDFKSVLTTYIGKHTHVVPAARNSSHVGAGSSGTLQGSLATQTHNHNVHYPMPHSRSEGLATANSSLFDFQSHLRHPTGFSVYIGQSELSDLSMPGLTIGQEKLTSLQAPDIGDPTGLMLQLAAQPKVEPVSPQQGLDLSASSLICREMLSRLRQI</sequence>
<keyword id="KW-0238">DNA-binding</keyword>
<keyword id="KW-0479">Metal-binding</keyword>
<keyword id="KW-0539">Nucleus</keyword>
<keyword id="KW-1185">Reference proteome</keyword>
<keyword id="KW-0677">Repeat</keyword>
<keyword id="KW-0804">Transcription</keyword>
<keyword id="KW-0805">Transcription regulation</keyword>
<keyword id="KW-0862">Zinc</keyword>
<comment type="function">
    <text evidence="1">Transcription factor. Interacts specifically with the W box (5'-(T)TGAC[CT]-3'), a frequently occurring elicitor-responsive cis-acting element.</text>
</comment>
<comment type="subcellular location">
    <subcellularLocation>
        <location evidence="1">Nucleus</location>
    </subcellularLocation>
</comment>
<comment type="similarity">
    <text evidence="4">Belongs to the WRKY group I family.</text>
</comment>
<protein>
    <recommendedName>
        <fullName>Probable WRKY transcription factor 34</fullName>
    </recommendedName>
    <alternativeName>
        <fullName>WRKY DNA-binding protein 34</fullName>
    </alternativeName>
</protein>